<sequence>MSETATWQPSASIPNLLKRAAIMAEIRRFFADRGVLEVETPCMSQATVTDIHLFPFETRFVGPGHSQGINLYLMTSPEYHMKRLLAAGCGPVFQLCRSFRNEEMGRHHNPEFTMLEWYRPHYDMYRLMNEVDDLLQQVLDCQPAESLSYQQAFQRHLEIDPLSADKTQLREAAAKLDLSNIADTEEDRDTLLQLLFTMGVEPHIGKEKPTFIYHFPASQASLAQISTEDHRVAERFEVYYKGIELANGFHELTDAREQQQRFEQDNRKRAARGLPQQPIDQNLLDALAAGLPDCSGVALGVDRLVMLALGAESLADVIAFTVDRA</sequence>
<reference key="1">
    <citation type="journal article" date="2011" name="J. Bacteriol.">
        <title>Comparative genomics of 28 Salmonella enterica isolates: evidence for CRISPR-mediated adaptive sublineage evolution.</title>
        <authorList>
            <person name="Fricke W.F."/>
            <person name="Mammel M.K."/>
            <person name="McDermott P.F."/>
            <person name="Tartera C."/>
            <person name="White D.G."/>
            <person name="Leclerc J.E."/>
            <person name="Ravel J."/>
            <person name="Cebula T.A."/>
        </authorList>
    </citation>
    <scope>NUCLEOTIDE SEQUENCE [LARGE SCALE GENOMIC DNA]</scope>
    <source>
        <strain>SL476</strain>
    </source>
</reference>
<keyword id="KW-0067">ATP-binding</keyword>
<keyword id="KW-0436">Ligase</keyword>
<keyword id="KW-0547">Nucleotide-binding</keyword>
<gene>
    <name evidence="1" type="primary">epmA</name>
    <name type="synonym">yjeA</name>
    <name type="ordered locus">SeHA_C4762</name>
</gene>
<proteinExistence type="inferred from homology"/>
<feature type="chain" id="PRO_1000097908" description="Elongation factor P--(R)-beta-lysine ligase">
    <location>
        <begin position="1"/>
        <end position="325"/>
    </location>
</feature>
<feature type="binding site" evidence="1">
    <location>
        <begin position="76"/>
        <end position="78"/>
    </location>
    <ligand>
        <name>substrate</name>
    </ligand>
</feature>
<feature type="binding site" evidence="1">
    <location>
        <begin position="100"/>
        <end position="102"/>
    </location>
    <ligand>
        <name>ATP</name>
        <dbReference type="ChEBI" id="CHEBI:30616"/>
    </ligand>
</feature>
<feature type="binding site" evidence="1">
    <location>
        <position position="109"/>
    </location>
    <ligand>
        <name>ATP</name>
        <dbReference type="ChEBI" id="CHEBI:30616"/>
    </ligand>
</feature>
<feature type="binding site" evidence="1">
    <location>
        <position position="118"/>
    </location>
    <ligand>
        <name>substrate</name>
    </ligand>
</feature>
<feature type="binding site" evidence="1">
    <location>
        <begin position="244"/>
        <end position="245"/>
    </location>
    <ligand>
        <name>ATP</name>
        <dbReference type="ChEBI" id="CHEBI:30616"/>
    </ligand>
</feature>
<feature type="binding site" evidence="1">
    <location>
        <position position="251"/>
    </location>
    <ligand>
        <name>substrate</name>
    </ligand>
</feature>
<feature type="binding site" evidence="1">
    <location>
        <position position="300"/>
    </location>
    <ligand>
        <name>ATP</name>
        <dbReference type="ChEBI" id="CHEBI:30616"/>
    </ligand>
</feature>
<dbReference type="EC" id="6.3.2.-" evidence="1"/>
<dbReference type="EMBL" id="CP001120">
    <property type="protein sequence ID" value="ACF66050.1"/>
    <property type="molecule type" value="Genomic_DNA"/>
</dbReference>
<dbReference type="RefSeq" id="WP_000004794.1">
    <property type="nucleotide sequence ID" value="NC_011083.1"/>
</dbReference>
<dbReference type="SMR" id="B4TF92"/>
<dbReference type="KEGG" id="seh:SeHA_C4762"/>
<dbReference type="HOGENOM" id="CLU_008255_1_1_6"/>
<dbReference type="Proteomes" id="UP000001866">
    <property type="component" value="Chromosome"/>
</dbReference>
<dbReference type="GO" id="GO:0005829">
    <property type="term" value="C:cytosol"/>
    <property type="evidence" value="ECO:0007669"/>
    <property type="project" value="TreeGrafter"/>
</dbReference>
<dbReference type="GO" id="GO:0016880">
    <property type="term" value="F:acid-ammonia (or amide) ligase activity"/>
    <property type="evidence" value="ECO:0007669"/>
    <property type="project" value="UniProtKB-UniRule"/>
</dbReference>
<dbReference type="GO" id="GO:0005524">
    <property type="term" value="F:ATP binding"/>
    <property type="evidence" value="ECO:0007669"/>
    <property type="project" value="UniProtKB-UniRule"/>
</dbReference>
<dbReference type="GO" id="GO:0004824">
    <property type="term" value="F:lysine-tRNA ligase activity"/>
    <property type="evidence" value="ECO:0007669"/>
    <property type="project" value="InterPro"/>
</dbReference>
<dbReference type="GO" id="GO:0000049">
    <property type="term" value="F:tRNA binding"/>
    <property type="evidence" value="ECO:0007669"/>
    <property type="project" value="TreeGrafter"/>
</dbReference>
<dbReference type="GO" id="GO:0006430">
    <property type="term" value="P:lysyl-tRNA aminoacylation"/>
    <property type="evidence" value="ECO:0007669"/>
    <property type="project" value="InterPro"/>
</dbReference>
<dbReference type="FunFam" id="3.30.930.10:FF:000017">
    <property type="entry name" value="Elongation factor P--(R)-beta-lysine ligase"/>
    <property type="match status" value="1"/>
</dbReference>
<dbReference type="Gene3D" id="3.30.930.10">
    <property type="entry name" value="Bira Bifunctional Protein, Domain 2"/>
    <property type="match status" value="1"/>
</dbReference>
<dbReference type="HAMAP" id="MF_00174">
    <property type="entry name" value="EF_P_modif_A"/>
    <property type="match status" value="1"/>
</dbReference>
<dbReference type="InterPro" id="IPR004364">
    <property type="entry name" value="Aa-tRNA-synt_II"/>
</dbReference>
<dbReference type="InterPro" id="IPR006195">
    <property type="entry name" value="aa-tRNA-synth_II"/>
</dbReference>
<dbReference type="InterPro" id="IPR045864">
    <property type="entry name" value="aa-tRNA-synth_II/BPL/LPL"/>
</dbReference>
<dbReference type="InterPro" id="IPR004525">
    <property type="entry name" value="EpmA"/>
</dbReference>
<dbReference type="InterPro" id="IPR018149">
    <property type="entry name" value="Lys-tRNA-synth_II_C"/>
</dbReference>
<dbReference type="NCBIfam" id="TIGR00462">
    <property type="entry name" value="genX"/>
    <property type="match status" value="1"/>
</dbReference>
<dbReference type="NCBIfam" id="NF006828">
    <property type="entry name" value="PRK09350.1"/>
    <property type="match status" value="1"/>
</dbReference>
<dbReference type="PANTHER" id="PTHR42918:SF6">
    <property type="entry name" value="ELONGATION FACTOR P--(R)-BETA-LYSINE LIGASE"/>
    <property type="match status" value="1"/>
</dbReference>
<dbReference type="PANTHER" id="PTHR42918">
    <property type="entry name" value="LYSYL-TRNA SYNTHETASE"/>
    <property type="match status" value="1"/>
</dbReference>
<dbReference type="Pfam" id="PF00152">
    <property type="entry name" value="tRNA-synt_2"/>
    <property type="match status" value="1"/>
</dbReference>
<dbReference type="PRINTS" id="PR00982">
    <property type="entry name" value="TRNASYNTHLYS"/>
</dbReference>
<dbReference type="SUPFAM" id="SSF55681">
    <property type="entry name" value="Class II aaRS and biotin synthetases"/>
    <property type="match status" value="1"/>
</dbReference>
<dbReference type="PROSITE" id="PS50862">
    <property type="entry name" value="AA_TRNA_LIGASE_II"/>
    <property type="match status" value="1"/>
</dbReference>
<protein>
    <recommendedName>
        <fullName evidence="1">Elongation factor P--(R)-beta-lysine ligase</fullName>
        <shortName evidence="1">EF-P--(R)-beta-lysine ligase</shortName>
        <ecNumber evidence="1">6.3.2.-</ecNumber>
    </recommendedName>
    <alternativeName>
        <fullName evidence="1">EF-P post-translational modification enzyme A</fullName>
    </alternativeName>
    <alternativeName>
        <fullName evidence="1">EF-P-lysine lysyltransferase</fullName>
    </alternativeName>
</protein>
<name>EPMA_SALHS</name>
<evidence type="ECO:0000255" key="1">
    <source>
        <dbReference type="HAMAP-Rule" id="MF_00174"/>
    </source>
</evidence>
<comment type="function">
    <text evidence="1">With EpmB is involved in the beta-lysylation step of the post-translational modification of translation elongation factor P (EF-P) on 'Lys-34'. Catalyzes the ATP-dependent activation of (R)-beta-lysine produced by EpmB, forming a lysyl-adenylate, from which the beta-lysyl moiety is then transferred to the epsilon-amino group of EF-P 'Lys-34'.</text>
</comment>
<comment type="catalytic activity">
    <reaction evidence="1">
        <text>D-beta-lysine + L-lysyl-[protein] + ATP = N(6)-((3R)-3,6-diaminohexanoyl)-L-lysyl-[protein] + AMP + diphosphate + H(+)</text>
        <dbReference type="Rhea" id="RHEA:83435"/>
        <dbReference type="Rhea" id="RHEA-COMP:9752"/>
        <dbReference type="Rhea" id="RHEA-COMP:20131"/>
        <dbReference type="ChEBI" id="CHEBI:15378"/>
        <dbReference type="ChEBI" id="CHEBI:29969"/>
        <dbReference type="ChEBI" id="CHEBI:30616"/>
        <dbReference type="ChEBI" id="CHEBI:33019"/>
        <dbReference type="ChEBI" id="CHEBI:84138"/>
        <dbReference type="ChEBI" id="CHEBI:156053"/>
        <dbReference type="ChEBI" id="CHEBI:456215"/>
    </reaction>
    <physiologicalReaction direction="left-to-right" evidence="1">
        <dbReference type="Rhea" id="RHEA:83436"/>
    </physiologicalReaction>
</comment>
<comment type="subunit">
    <text evidence="1">Homodimer.</text>
</comment>
<comment type="similarity">
    <text evidence="1">Belongs to the class-II aminoacyl-tRNA synthetase family. EpmA subfamily.</text>
</comment>
<accession>B4TF92</accession>
<organism>
    <name type="scientific">Salmonella heidelberg (strain SL476)</name>
    <dbReference type="NCBI Taxonomy" id="454169"/>
    <lineage>
        <taxon>Bacteria</taxon>
        <taxon>Pseudomonadati</taxon>
        <taxon>Pseudomonadota</taxon>
        <taxon>Gammaproteobacteria</taxon>
        <taxon>Enterobacterales</taxon>
        <taxon>Enterobacteriaceae</taxon>
        <taxon>Salmonella</taxon>
    </lineage>
</organism>